<organism>
    <name type="scientific">Ehrlichia canis (strain Jake)</name>
    <dbReference type="NCBI Taxonomy" id="269484"/>
    <lineage>
        <taxon>Bacteria</taxon>
        <taxon>Pseudomonadati</taxon>
        <taxon>Pseudomonadota</taxon>
        <taxon>Alphaproteobacteria</taxon>
        <taxon>Rickettsiales</taxon>
        <taxon>Anaplasmataceae</taxon>
        <taxon>Ehrlichia</taxon>
    </lineage>
</organism>
<gene>
    <name evidence="1" type="primary">lolD</name>
    <name type="ordered locus">Ecaj_0117</name>
</gene>
<keyword id="KW-0067">ATP-binding</keyword>
<keyword id="KW-0997">Cell inner membrane</keyword>
<keyword id="KW-1003">Cell membrane</keyword>
<keyword id="KW-0472">Membrane</keyword>
<keyword id="KW-0547">Nucleotide-binding</keyword>
<keyword id="KW-1278">Translocase</keyword>
<keyword id="KW-0813">Transport</keyword>
<reference key="1">
    <citation type="journal article" date="2006" name="J. Bacteriol.">
        <title>The genome of the obligately intracellular bacterium Ehrlichia canis reveals themes of complex membrane structure and immune evasion strategies.</title>
        <authorList>
            <person name="Mavromatis K."/>
            <person name="Doyle C.K."/>
            <person name="Lykidis A."/>
            <person name="Ivanova N."/>
            <person name="Francino M.P."/>
            <person name="Chain P."/>
            <person name="Shin M."/>
            <person name="Malfatti S."/>
            <person name="Larimer F."/>
            <person name="Copeland A."/>
            <person name="Detter J.C."/>
            <person name="Land M."/>
            <person name="Richardson P.M."/>
            <person name="Yu X.J."/>
            <person name="Walker D.H."/>
            <person name="McBride J.W."/>
            <person name="Kyrpides N.C."/>
        </authorList>
    </citation>
    <scope>NUCLEOTIDE SEQUENCE [LARGE SCALE GENOMIC DNA]</scope>
    <source>
        <strain>Jake</strain>
    </source>
</reference>
<accession>Q3YSY7</accession>
<evidence type="ECO:0000255" key="1">
    <source>
        <dbReference type="HAMAP-Rule" id="MF_01708"/>
    </source>
</evidence>
<comment type="function">
    <text evidence="1">Part of the ABC transporter complex LolCDE involved in the translocation of mature outer membrane-directed lipoproteins, from the inner membrane to the periplasmic chaperone, LolA. Responsible for the formation of the LolA-lipoprotein complex in an ATP-dependent manner.</text>
</comment>
<comment type="subunit">
    <text evidence="1">The complex is composed of two ATP-binding proteins (LolD) and two transmembrane proteins (LolC and LolE).</text>
</comment>
<comment type="subcellular location">
    <subcellularLocation>
        <location evidence="1">Cell inner membrane</location>
        <topology evidence="1">Peripheral membrane protein</topology>
    </subcellularLocation>
</comment>
<comment type="similarity">
    <text evidence="1">Belongs to the ABC transporter superfamily. Lipoprotein translocase (TC 3.A.1.125) family.</text>
</comment>
<dbReference type="EC" id="7.6.2.-" evidence="1"/>
<dbReference type="EMBL" id="CP000107">
    <property type="protein sequence ID" value="AAZ68168.1"/>
    <property type="molecule type" value="Genomic_DNA"/>
</dbReference>
<dbReference type="RefSeq" id="WP_011304246.1">
    <property type="nucleotide sequence ID" value="NC_007354.1"/>
</dbReference>
<dbReference type="SMR" id="Q3YSY7"/>
<dbReference type="FunCoup" id="Q3YSY7">
    <property type="interactions" value="200"/>
</dbReference>
<dbReference type="STRING" id="269484.Ecaj_0117"/>
<dbReference type="KEGG" id="ecn:Ecaj_0117"/>
<dbReference type="eggNOG" id="COG1136">
    <property type="taxonomic scope" value="Bacteria"/>
</dbReference>
<dbReference type="HOGENOM" id="CLU_000604_1_22_5"/>
<dbReference type="InParanoid" id="Q3YSY7"/>
<dbReference type="Proteomes" id="UP000000435">
    <property type="component" value="Chromosome"/>
</dbReference>
<dbReference type="GO" id="GO:0005886">
    <property type="term" value="C:plasma membrane"/>
    <property type="evidence" value="ECO:0007669"/>
    <property type="project" value="UniProtKB-SubCell"/>
</dbReference>
<dbReference type="GO" id="GO:0005524">
    <property type="term" value="F:ATP binding"/>
    <property type="evidence" value="ECO:0007669"/>
    <property type="project" value="UniProtKB-KW"/>
</dbReference>
<dbReference type="GO" id="GO:0016887">
    <property type="term" value="F:ATP hydrolysis activity"/>
    <property type="evidence" value="ECO:0007669"/>
    <property type="project" value="InterPro"/>
</dbReference>
<dbReference type="CDD" id="cd03255">
    <property type="entry name" value="ABC_MJ0796_LolCDE_FtsE"/>
    <property type="match status" value="1"/>
</dbReference>
<dbReference type="Gene3D" id="3.40.50.300">
    <property type="entry name" value="P-loop containing nucleotide triphosphate hydrolases"/>
    <property type="match status" value="1"/>
</dbReference>
<dbReference type="InterPro" id="IPR003593">
    <property type="entry name" value="AAA+_ATPase"/>
</dbReference>
<dbReference type="InterPro" id="IPR003439">
    <property type="entry name" value="ABC_transporter-like_ATP-bd"/>
</dbReference>
<dbReference type="InterPro" id="IPR017871">
    <property type="entry name" value="ABC_transporter-like_CS"/>
</dbReference>
<dbReference type="InterPro" id="IPR017911">
    <property type="entry name" value="MacB-like_ATP-bd"/>
</dbReference>
<dbReference type="InterPro" id="IPR027417">
    <property type="entry name" value="P-loop_NTPase"/>
</dbReference>
<dbReference type="PANTHER" id="PTHR42798:SF7">
    <property type="entry name" value="ALPHA-D-RIBOSE 1-METHYLPHOSPHONATE 5-TRIPHOSPHATE SYNTHASE SUBUNIT PHNL"/>
    <property type="match status" value="1"/>
</dbReference>
<dbReference type="PANTHER" id="PTHR42798">
    <property type="entry name" value="LIPOPROTEIN-RELEASING SYSTEM ATP-BINDING PROTEIN LOLD"/>
    <property type="match status" value="1"/>
</dbReference>
<dbReference type="Pfam" id="PF00005">
    <property type="entry name" value="ABC_tran"/>
    <property type="match status" value="1"/>
</dbReference>
<dbReference type="SMART" id="SM00382">
    <property type="entry name" value="AAA"/>
    <property type="match status" value="1"/>
</dbReference>
<dbReference type="SUPFAM" id="SSF52540">
    <property type="entry name" value="P-loop containing nucleoside triphosphate hydrolases"/>
    <property type="match status" value="1"/>
</dbReference>
<dbReference type="PROSITE" id="PS00211">
    <property type="entry name" value="ABC_TRANSPORTER_1"/>
    <property type="match status" value="1"/>
</dbReference>
<dbReference type="PROSITE" id="PS50893">
    <property type="entry name" value="ABC_TRANSPORTER_2"/>
    <property type="match status" value="1"/>
</dbReference>
<dbReference type="PROSITE" id="PS51244">
    <property type="entry name" value="LOLD"/>
    <property type="match status" value="1"/>
</dbReference>
<proteinExistence type="inferred from homology"/>
<name>LOLD_EHRCJ</name>
<protein>
    <recommendedName>
        <fullName evidence="1">Lipoprotein-releasing system ATP-binding protein LolD</fullName>
        <ecNumber evidence="1">7.6.2.-</ecNumber>
    </recommendedName>
</protein>
<feature type="chain" id="PRO_0000272078" description="Lipoprotein-releasing system ATP-binding protein LolD">
    <location>
        <begin position="1"/>
        <end position="226"/>
    </location>
</feature>
<feature type="domain" description="ABC transporter" evidence="1">
    <location>
        <begin position="5"/>
        <end position="225"/>
    </location>
</feature>
<feature type="binding site" evidence="1">
    <location>
        <begin position="40"/>
        <end position="47"/>
    </location>
    <ligand>
        <name>ATP</name>
        <dbReference type="ChEBI" id="CHEBI:30616"/>
    </ligand>
</feature>
<sequence>MSTVFALSNISKFFGKNNELPIITNANIKIKKGEIVALIGRSGSGKSTLLHIAGLLDTPSSGNIFINNIECSNKTSDKDKTFLRRHFLGFIYQFHHLLQEFSVLENVMLPQIIIGKSKSIAKKNAMEILERVKLQDKFSMSISQLSGGERQRVAIARSLINCPLIVLADEPTGSLDNNTAFEVFSLLQEYAKEKNIAIFLATHNKSLAQKACRIVEINSCMLSSVD</sequence>